<accession>B0KPL8</accession>
<proteinExistence type="inferred from homology"/>
<feature type="chain" id="PRO_1000083176" description="Probable 5-dehydro-4-deoxyglucarate dehydratase">
    <location>
        <begin position="1"/>
        <end position="303"/>
    </location>
</feature>
<comment type="catalytic activity">
    <reaction evidence="1">
        <text>5-dehydro-4-deoxy-D-glucarate + H(+) = 2,5-dioxopentanoate + CO2 + H2O</text>
        <dbReference type="Rhea" id="RHEA:24608"/>
        <dbReference type="ChEBI" id="CHEBI:15377"/>
        <dbReference type="ChEBI" id="CHEBI:15378"/>
        <dbReference type="ChEBI" id="CHEBI:16526"/>
        <dbReference type="ChEBI" id="CHEBI:42819"/>
        <dbReference type="ChEBI" id="CHEBI:58136"/>
        <dbReference type="EC" id="4.2.1.41"/>
    </reaction>
</comment>
<comment type="pathway">
    <text evidence="1">Carbohydrate acid metabolism; D-glucarate degradation; 2,5-dioxopentanoate from D-glucarate: step 2/2.</text>
</comment>
<comment type="similarity">
    <text evidence="1">Belongs to the DapA family.</text>
</comment>
<dbReference type="EC" id="4.2.1.41" evidence="1"/>
<dbReference type="EMBL" id="CP000926">
    <property type="protein sequence ID" value="ABY98218.1"/>
    <property type="molecule type" value="Genomic_DNA"/>
</dbReference>
<dbReference type="SMR" id="B0KPL8"/>
<dbReference type="KEGG" id="ppg:PputGB1_2317"/>
<dbReference type="eggNOG" id="COG0329">
    <property type="taxonomic scope" value="Bacteria"/>
</dbReference>
<dbReference type="HOGENOM" id="CLU_049343_5_2_6"/>
<dbReference type="UniPathway" id="UPA00564">
    <property type="reaction ID" value="UER00628"/>
</dbReference>
<dbReference type="Proteomes" id="UP000002157">
    <property type="component" value="Chromosome"/>
</dbReference>
<dbReference type="GO" id="GO:0008840">
    <property type="term" value="F:4-hydroxy-tetrahydrodipicolinate synthase activity"/>
    <property type="evidence" value="ECO:0007669"/>
    <property type="project" value="TreeGrafter"/>
</dbReference>
<dbReference type="GO" id="GO:0047448">
    <property type="term" value="F:5-dehydro-4-deoxyglucarate dehydratase activity"/>
    <property type="evidence" value="ECO:0007669"/>
    <property type="project" value="UniProtKB-UniRule"/>
</dbReference>
<dbReference type="GO" id="GO:0042838">
    <property type="term" value="P:D-glucarate catabolic process"/>
    <property type="evidence" value="ECO:0007669"/>
    <property type="project" value="UniProtKB-UniRule"/>
</dbReference>
<dbReference type="CDD" id="cd00951">
    <property type="entry name" value="KDGDH"/>
    <property type="match status" value="1"/>
</dbReference>
<dbReference type="Gene3D" id="3.20.20.70">
    <property type="entry name" value="Aldolase class I"/>
    <property type="match status" value="1"/>
</dbReference>
<dbReference type="HAMAP" id="MF_00694">
    <property type="entry name" value="KDGDH"/>
    <property type="match status" value="1"/>
</dbReference>
<dbReference type="InterPro" id="IPR013785">
    <property type="entry name" value="Aldolase_TIM"/>
</dbReference>
<dbReference type="InterPro" id="IPR002220">
    <property type="entry name" value="DapA-like"/>
</dbReference>
<dbReference type="InterPro" id="IPR017655">
    <property type="entry name" value="Dehydro-deoxyglucarate_dehyd"/>
</dbReference>
<dbReference type="NCBIfam" id="TIGR03249">
    <property type="entry name" value="KdgD"/>
    <property type="match status" value="1"/>
</dbReference>
<dbReference type="NCBIfam" id="NF002958">
    <property type="entry name" value="PRK03620.1"/>
    <property type="match status" value="1"/>
</dbReference>
<dbReference type="PANTHER" id="PTHR12128:SF19">
    <property type="entry name" value="5-DEHYDRO-4-DEOXYGLUCARATE DEHYDRATASE 2-RELATED"/>
    <property type="match status" value="1"/>
</dbReference>
<dbReference type="PANTHER" id="PTHR12128">
    <property type="entry name" value="DIHYDRODIPICOLINATE SYNTHASE"/>
    <property type="match status" value="1"/>
</dbReference>
<dbReference type="Pfam" id="PF00701">
    <property type="entry name" value="DHDPS"/>
    <property type="match status" value="1"/>
</dbReference>
<dbReference type="PIRSF" id="PIRSF001365">
    <property type="entry name" value="DHDPS"/>
    <property type="match status" value="1"/>
</dbReference>
<dbReference type="SMART" id="SM01130">
    <property type="entry name" value="DHDPS"/>
    <property type="match status" value="1"/>
</dbReference>
<dbReference type="SUPFAM" id="SSF51569">
    <property type="entry name" value="Aldolase"/>
    <property type="match status" value="1"/>
</dbReference>
<keyword id="KW-0456">Lyase</keyword>
<evidence type="ECO:0000255" key="1">
    <source>
        <dbReference type="HAMAP-Rule" id="MF_00694"/>
    </source>
</evidence>
<gene>
    <name type="ordered locus">PputGB1_2317</name>
</gene>
<protein>
    <recommendedName>
        <fullName evidence="1">Probable 5-dehydro-4-deoxyglucarate dehydratase</fullName>
        <ecNumber evidence="1">4.2.1.41</ecNumber>
    </recommendedName>
    <alternativeName>
        <fullName evidence="1">5-keto-4-deoxy-glucarate dehydratase</fullName>
        <shortName evidence="1">KDGDH</shortName>
    </alternativeName>
</protein>
<organism>
    <name type="scientific">Pseudomonas putida (strain GB-1)</name>
    <dbReference type="NCBI Taxonomy" id="76869"/>
    <lineage>
        <taxon>Bacteria</taxon>
        <taxon>Pseudomonadati</taxon>
        <taxon>Pseudomonadota</taxon>
        <taxon>Gammaproteobacteria</taxon>
        <taxon>Pseudomonadales</taxon>
        <taxon>Pseudomonadaceae</taxon>
        <taxon>Pseudomonas</taxon>
    </lineage>
</organism>
<reference key="1">
    <citation type="submission" date="2008-01" db="EMBL/GenBank/DDBJ databases">
        <title>Complete sequence of Pseudomonas putida GB-1.</title>
        <authorList>
            <consortium name="US DOE Joint Genome Institute"/>
            <person name="Copeland A."/>
            <person name="Lucas S."/>
            <person name="Lapidus A."/>
            <person name="Barry K."/>
            <person name="Glavina del Rio T."/>
            <person name="Dalin E."/>
            <person name="Tice H."/>
            <person name="Pitluck S."/>
            <person name="Bruce D."/>
            <person name="Goodwin L."/>
            <person name="Chertkov O."/>
            <person name="Brettin T."/>
            <person name="Detter J.C."/>
            <person name="Han C."/>
            <person name="Kuske C.R."/>
            <person name="Schmutz J."/>
            <person name="Larimer F."/>
            <person name="Land M."/>
            <person name="Hauser L."/>
            <person name="Kyrpides N."/>
            <person name="Kim E."/>
            <person name="McCarthy J.K."/>
            <person name="Richardson P."/>
        </authorList>
    </citation>
    <scope>NUCLEOTIDE SEQUENCE [LARGE SCALE GENOMIC DNA]</scope>
    <source>
        <strain>GB-1</strain>
    </source>
</reference>
<sequence>MNPQELKSILSHGLLSFPVTDFNAQGDFNPAGYIKRLEWLAPYGASALFAAGGTGEFFSLAASEYSQVIKTAVDTCATSVPILAGVGGSTRQAIEYAQEAERLGAKGLLLLPHYLTEASQDGVAAHVEAVCKSVNIGVVVYNRNVCRLNADLLEKLAERCPNLIGYKDGLGDIELMVSIRRRLGERFSYLGGLPTAEVYAAAYKALGVPVYSSAVFNFVPKTAMDFYSAIARDDHAAVAKLIDDFFLPYLDIRNRKAGYAVSIVKAGAKIAGYDAGPVRTPLTDLTAEEYEMLAALMDKMGPQ</sequence>
<name>KDGD_PSEPG</name>